<feature type="chain" id="PRO_0000103367" description="Error-prone DNA polymerase">
    <location>
        <begin position="1"/>
        <end position="1052"/>
    </location>
</feature>
<keyword id="KW-0963">Cytoplasm</keyword>
<keyword id="KW-0227">DNA damage</keyword>
<keyword id="KW-0234">DNA repair</keyword>
<keyword id="KW-0235">DNA replication</keyword>
<keyword id="KW-0239">DNA-directed DNA polymerase</keyword>
<keyword id="KW-0548">Nucleotidyltransferase</keyword>
<keyword id="KW-0808">Transferase</keyword>
<name>DNAE2_BORBR</name>
<reference key="1">
    <citation type="journal article" date="2003" name="Nat. Genet.">
        <title>Comparative analysis of the genome sequences of Bordetella pertussis, Bordetella parapertussis and Bordetella bronchiseptica.</title>
        <authorList>
            <person name="Parkhill J."/>
            <person name="Sebaihia M."/>
            <person name="Preston A."/>
            <person name="Murphy L.D."/>
            <person name="Thomson N.R."/>
            <person name="Harris D.E."/>
            <person name="Holden M.T.G."/>
            <person name="Churcher C.M."/>
            <person name="Bentley S.D."/>
            <person name="Mungall K.L."/>
            <person name="Cerdeno-Tarraga A.-M."/>
            <person name="Temple L."/>
            <person name="James K.D."/>
            <person name="Harris B."/>
            <person name="Quail M.A."/>
            <person name="Achtman M."/>
            <person name="Atkin R."/>
            <person name="Baker S."/>
            <person name="Basham D."/>
            <person name="Bason N."/>
            <person name="Cherevach I."/>
            <person name="Chillingworth T."/>
            <person name="Collins M."/>
            <person name="Cronin A."/>
            <person name="Davis P."/>
            <person name="Doggett J."/>
            <person name="Feltwell T."/>
            <person name="Goble A."/>
            <person name="Hamlin N."/>
            <person name="Hauser H."/>
            <person name="Holroyd S."/>
            <person name="Jagels K."/>
            <person name="Leather S."/>
            <person name="Moule S."/>
            <person name="Norberczak H."/>
            <person name="O'Neil S."/>
            <person name="Ormond D."/>
            <person name="Price C."/>
            <person name="Rabbinowitsch E."/>
            <person name="Rutter S."/>
            <person name="Sanders M."/>
            <person name="Saunders D."/>
            <person name="Seeger K."/>
            <person name="Sharp S."/>
            <person name="Simmonds M."/>
            <person name="Skelton J."/>
            <person name="Squares R."/>
            <person name="Squares S."/>
            <person name="Stevens K."/>
            <person name="Unwin L."/>
            <person name="Whitehead S."/>
            <person name="Barrell B.G."/>
            <person name="Maskell D.J."/>
        </authorList>
    </citation>
    <scope>NUCLEOTIDE SEQUENCE [LARGE SCALE GENOMIC DNA]</scope>
    <source>
        <strain>ATCC BAA-588 / NCTC 13252 / RB50</strain>
    </source>
</reference>
<gene>
    <name evidence="1" type="primary">dnaE2</name>
    <name type="ordered locus">BB3088</name>
</gene>
<accession>Q7WHW8</accession>
<organism>
    <name type="scientific">Bordetella bronchiseptica (strain ATCC BAA-588 / NCTC 13252 / RB50)</name>
    <name type="common">Alcaligenes bronchisepticus</name>
    <dbReference type="NCBI Taxonomy" id="257310"/>
    <lineage>
        <taxon>Bacteria</taxon>
        <taxon>Pseudomonadati</taxon>
        <taxon>Pseudomonadota</taxon>
        <taxon>Betaproteobacteria</taxon>
        <taxon>Burkholderiales</taxon>
        <taxon>Alcaligenaceae</taxon>
        <taxon>Bordetella</taxon>
    </lineage>
</organism>
<dbReference type="EC" id="2.7.7.7" evidence="1"/>
<dbReference type="EMBL" id="BX640446">
    <property type="protein sequence ID" value="CAE33580.1"/>
    <property type="molecule type" value="Genomic_DNA"/>
</dbReference>
<dbReference type="RefSeq" id="WP_010926731.1">
    <property type="nucleotide sequence ID" value="NC_002927.3"/>
</dbReference>
<dbReference type="SMR" id="Q7WHW8"/>
<dbReference type="KEGG" id="bbr:BB3088"/>
<dbReference type="eggNOG" id="COG0587">
    <property type="taxonomic scope" value="Bacteria"/>
</dbReference>
<dbReference type="HOGENOM" id="CLU_001600_4_0_4"/>
<dbReference type="Proteomes" id="UP000001027">
    <property type="component" value="Chromosome"/>
</dbReference>
<dbReference type="GO" id="GO:0005737">
    <property type="term" value="C:cytoplasm"/>
    <property type="evidence" value="ECO:0007669"/>
    <property type="project" value="UniProtKB-SubCell"/>
</dbReference>
<dbReference type="GO" id="GO:0008408">
    <property type="term" value="F:3'-5' exonuclease activity"/>
    <property type="evidence" value="ECO:0007669"/>
    <property type="project" value="InterPro"/>
</dbReference>
<dbReference type="GO" id="GO:0003887">
    <property type="term" value="F:DNA-directed DNA polymerase activity"/>
    <property type="evidence" value="ECO:0007669"/>
    <property type="project" value="UniProtKB-UniRule"/>
</dbReference>
<dbReference type="GO" id="GO:0003676">
    <property type="term" value="F:nucleic acid binding"/>
    <property type="evidence" value="ECO:0007669"/>
    <property type="project" value="InterPro"/>
</dbReference>
<dbReference type="GO" id="GO:0006281">
    <property type="term" value="P:DNA repair"/>
    <property type="evidence" value="ECO:0007669"/>
    <property type="project" value="UniProtKB-UniRule"/>
</dbReference>
<dbReference type="GO" id="GO:0006260">
    <property type="term" value="P:DNA replication"/>
    <property type="evidence" value="ECO:0007669"/>
    <property type="project" value="UniProtKB-KW"/>
</dbReference>
<dbReference type="CDD" id="cd04485">
    <property type="entry name" value="DnaE_OBF"/>
    <property type="match status" value="1"/>
</dbReference>
<dbReference type="CDD" id="cd07434">
    <property type="entry name" value="PHP_PolIIIA_DnaE2"/>
    <property type="match status" value="1"/>
</dbReference>
<dbReference type="Gene3D" id="1.10.150.870">
    <property type="match status" value="1"/>
</dbReference>
<dbReference type="Gene3D" id="3.20.20.140">
    <property type="entry name" value="Metal-dependent hydrolases"/>
    <property type="match status" value="1"/>
</dbReference>
<dbReference type="HAMAP" id="MF_01902">
    <property type="entry name" value="DNApol_error_prone"/>
    <property type="match status" value="1"/>
</dbReference>
<dbReference type="InterPro" id="IPR011708">
    <property type="entry name" value="DNA_pol3_alpha_NTPase_dom"/>
</dbReference>
<dbReference type="InterPro" id="IPR040982">
    <property type="entry name" value="DNA_pol3_finger"/>
</dbReference>
<dbReference type="InterPro" id="IPR023073">
    <property type="entry name" value="DnaE2"/>
</dbReference>
<dbReference type="InterPro" id="IPR004805">
    <property type="entry name" value="DnaE2/DnaE/PolC"/>
</dbReference>
<dbReference type="InterPro" id="IPR029460">
    <property type="entry name" value="DNAPol_HHH"/>
</dbReference>
<dbReference type="InterPro" id="IPR004365">
    <property type="entry name" value="NA-bd_OB_tRNA"/>
</dbReference>
<dbReference type="InterPro" id="IPR004013">
    <property type="entry name" value="PHP_dom"/>
</dbReference>
<dbReference type="InterPro" id="IPR003141">
    <property type="entry name" value="Pol/His_phosphatase_N"/>
</dbReference>
<dbReference type="InterPro" id="IPR016195">
    <property type="entry name" value="Pol/histidinol_Pase-like"/>
</dbReference>
<dbReference type="NCBIfam" id="TIGR00594">
    <property type="entry name" value="polc"/>
    <property type="match status" value="1"/>
</dbReference>
<dbReference type="NCBIfam" id="NF004225">
    <property type="entry name" value="PRK05672.1"/>
    <property type="match status" value="1"/>
</dbReference>
<dbReference type="PANTHER" id="PTHR32294">
    <property type="entry name" value="DNA POLYMERASE III SUBUNIT ALPHA"/>
    <property type="match status" value="1"/>
</dbReference>
<dbReference type="PANTHER" id="PTHR32294:SF4">
    <property type="entry name" value="ERROR-PRONE DNA POLYMERASE"/>
    <property type="match status" value="1"/>
</dbReference>
<dbReference type="Pfam" id="PF07733">
    <property type="entry name" value="DNA_pol3_alpha"/>
    <property type="match status" value="1"/>
</dbReference>
<dbReference type="Pfam" id="PF17657">
    <property type="entry name" value="DNA_pol3_finger"/>
    <property type="match status" value="1"/>
</dbReference>
<dbReference type="Pfam" id="PF14579">
    <property type="entry name" value="HHH_6"/>
    <property type="match status" value="1"/>
</dbReference>
<dbReference type="Pfam" id="PF02811">
    <property type="entry name" value="PHP"/>
    <property type="match status" value="1"/>
</dbReference>
<dbReference type="Pfam" id="PF01336">
    <property type="entry name" value="tRNA_anti-codon"/>
    <property type="match status" value="1"/>
</dbReference>
<dbReference type="SMART" id="SM00481">
    <property type="entry name" value="POLIIIAc"/>
    <property type="match status" value="1"/>
</dbReference>
<dbReference type="SUPFAM" id="SSF89550">
    <property type="entry name" value="PHP domain-like"/>
    <property type="match status" value="1"/>
</dbReference>
<evidence type="ECO:0000255" key="1">
    <source>
        <dbReference type="HAMAP-Rule" id="MF_01902"/>
    </source>
</evidence>
<protein>
    <recommendedName>
        <fullName evidence="1">Error-prone DNA polymerase</fullName>
        <ecNumber evidence="1">2.7.7.7</ecNumber>
    </recommendedName>
</protein>
<comment type="function">
    <text evidence="1">DNA polymerase involved in damage-induced mutagenesis and translesion synthesis (TLS). It is not the major replicative DNA polymerase.</text>
</comment>
<comment type="catalytic activity">
    <reaction evidence="1">
        <text>DNA(n) + a 2'-deoxyribonucleoside 5'-triphosphate = DNA(n+1) + diphosphate</text>
        <dbReference type="Rhea" id="RHEA:22508"/>
        <dbReference type="Rhea" id="RHEA-COMP:17339"/>
        <dbReference type="Rhea" id="RHEA-COMP:17340"/>
        <dbReference type="ChEBI" id="CHEBI:33019"/>
        <dbReference type="ChEBI" id="CHEBI:61560"/>
        <dbReference type="ChEBI" id="CHEBI:173112"/>
        <dbReference type="EC" id="2.7.7.7"/>
    </reaction>
</comment>
<comment type="subcellular location">
    <subcellularLocation>
        <location evidence="1">Cytoplasm</location>
    </subcellularLocation>
</comment>
<comment type="similarity">
    <text evidence="1">Belongs to the DNA polymerase type-C family. DnaE2 subfamily.</text>
</comment>
<sequence>MSAILPGYAELHCQSNFSFLQGASHPEELVTRAGELGYAALALTDECSLAGVVRAHVEAREQKLPLIIGSSFTLQAGADAPPLDLTLLAQNREGYGNLAELITLGRGRAAKGQYLLTPADIEAPAGDNAHLRGMPDCLAILAPPPGLAAERLAEQARWLAAQCPGRAWIGLTLLHHCRDDLHRAAVEHAAHASGLPIVALGQAQMHRRSRKPLHDTLAAIRTGRSVGQCGYDLAANAERHLRSRLRLASLYPAQALAQTLAIARRCTFSLDELQYEYPDEIVPAGHTPASYLRQQTYLGARQRFPEGMTPAVAAQVEKELALINELRYEAYFLTVYDIVGYARSQGILCQGRGSAANSAVCYCLGITAVDPARGNTLFERFISKERNEPPDIDVDFEHQRREEVIQYIYEKYGRQRAALTAVVISYRPRSVLRDTGRALGVDNGIIDAVARAHQWWDGKKEMLRSLAACGLDPASRVARQWAELAETLMGFPRHLSQHPGGFVISRGKLSRLVPIENAAMPGRSVVQWDKDDLDALRLLKVDVLALGMLSVLRRALALAGQRRGRPLALHEIPPDDDATYDMICAADTIGVFQIESRAQMSMLPRLRPRQYYDLVVQVAIVRPGPIQGGMVHPYLRRRQGREDITYPGPAVRKALARTLGVPIFQEQVMQIAVDAAGFTPGEADALRRSMAAWRRKGGVDKFRAQLVGGLLARNYTADFAQALFRQIEGFGEYGFPESHAASFALLAYASSWLKCHEPEAFLAALLNSQPMGFYAPAQLVQDARRHGVRVLPADVLYSGWEASLQDAPGAARPAVRLGLNLVKGLREDSARAIEQARVRRPFADTADMARRAGLPRQALDALAAADALRTLAGHRRLASWQAAASAQSRDLLREAVIVETETPALPAPSEGQTVAADYRSVGLTLGRHPLALLRPQLAARNFQTAAVLNTYPNRRLARACGIVTVRQRPQTAKGTIFVTLEDETGPINAVVRPELIERQRRELLDATLLGIYGTWQSVDGVRHLVAQRLVDLSSLLGQLSQDGLAAASRNFH</sequence>
<proteinExistence type="inferred from homology"/>